<reference key="1">
    <citation type="journal article" date="2005" name="Nature">
        <title>Sequencing of Aspergillus nidulans and comparative analysis with A. fumigatus and A. oryzae.</title>
        <authorList>
            <person name="Galagan J.E."/>
            <person name="Calvo S.E."/>
            <person name="Cuomo C."/>
            <person name="Ma L.-J."/>
            <person name="Wortman J.R."/>
            <person name="Batzoglou S."/>
            <person name="Lee S.-I."/>
            <person name="Bastuerkmen M."/>
            <person name="Spevak C.C."/>
            <person name="Clutterbuck J."/>
            <person name="Kapitonov V."/>
            <person name="Jurka J."/>
            <person name="Scazzocchio C."/>
            <person name="Farman M.L."/>
            <person name="Butler J."/>
            <person name="Purcell S."/>
            <person name="Harris S."/>
            <person name="Braus G.H."/>
            <person name="Draht O."/>
            <person name="Busch S."/>
            <person name="D'Enfert C."/>
            <person name="Bouchier C."/>
            <person name="Goldman G.H."/>
            <person name="Bell-Pedersen D."/>
            <person name="Griffiths-Jones S."/>
            <person name="Doonan J.H."/>
            <person name="Yu J."/>
            <person name="Vienken K."/>
            <person name="Pain A."/>
            <person name="Freitag M."/>
            <person name="Selker E.U."/>
            <person name="Archer D.B."/>
            <person name="Penalva M.A."/>
            <person name="Oakley B.R."/>
            <person name="Momany M."/>
            <person name="Tanaka T."/>
            <person name="Kumagai T."/>
            <person name="Asai K."/>
            <person name="Machida M."/>
            <person name="Nierman W.C."/>
            <person name="Denning D.W."/>
            <person name="Caddick M.X."/>
            <person name="Hynes M."/>
            <person name="Paoletti M."/>
            <person name="Fischer R."/>
            <person name="Miller B.L."/>
            <person name="Dyer P.S."/>
            <person name="Sachs M.S."/>
            <person name="Osmani S.A."/>
            <person name="Birren B.W."/>
        </authorList>
    </citation>
    <scope>NUCLEOTIDE SEQUENCE [LARGE SCALE GENOMIC DNA]</scope>
    <source>
        <strain>FGSC A4 / ATCC 38163 / CBS 112.46 / NRRL 194 / M139</strain>
    </source>
</reference>
<reference key="2">
    <citation type="journal article" date="2009" name="Fungal Genet. Biol.">
        <title>The 2008 update of the Aspergillus nidulans genome annotation: a community effort.</title>
        <authorList>
            <person name="Wortman J.R."/>
            <person name="Gilsenan J.M."/>
            <person name="Joardar V."/>
            <person name="Deegan J."/>
            <person name="Clutterbuck J."/>
            <person name="Andersen M.R."/>
            <person name="Archer D."/>
            <person name="Bencina M."/>
            <person name="Braus G."/>
            <person name="Coutinho P."/>
            <person name="von Dohren H."/>
            <person name="Doonan J."/>
            <person name="Driessen A.J."/>
            <person name="Durek P."/>
            <person name="Espeso E."/>
            <person name="Fekete E."/>
            <person name="Flipphi M."/>
            <person name="Estrada C.G."/>
            <person name="Geysens S."/>
            <person name="Goldman G."/>
            <person name="de Groot P.W."/>
            <person name="Hansen K."/>
            <person name="Harris S.D."/>
            <person name="Heinekamp T."/>
            <person name="Helmstaedt K."/>
            <person name="Henrissat B."/>
            <person name="Hofmann G."/>
            <person name="Homan T."/>
            <person name="Horio T."/>
            <person name="Horiuchi H."/>
            <person name="James S."/>
            <person name="Jones M."/>
            <person name="Karaffa L."/>
            <person name="Karanyi Z."/>
            <person name="Kato M."/>
            <person name="Keller N."/>
            <person name="Kelly D.E."/>
            <person name="Kiel J.A."/>
            <person name="Kim J.M."/>
            <person name="van der Klei I.J."/>
            <person name="Klis F.M."/>
            <person name="Kovalchuk A."/>
            <person name="Krasevec N."/>
            <person name="Kubicek C.P."/>
            <person name="Liu B."/>
            <person name="Maccabe A."/>
            <person name="Meyer V."/>
            <person name="Mirabito P."/>
            <person name="Miskei M."/>
            <person name="Mos M."/>
            <person name="Mullins J."/>
            <person name="Nelson D.R."/>
            <person name="Nielsen J."/>
            <person name="Oakley B.R."/>
            <person name="Osmani S.A."/>
            <person name="Pakula T."/>
            <person name="Paszewski A."/>
            <person name="Paulsen I."/>
            <person name="Pilsyk S."/>
            <person name="Pocsi I."/>
            <person name="Punt P.J."/>
            <person name="Ram A.F."/>
            <person name="Ren Q."/>
            <person name="Robellet X."/>
            <person name="Robson G."/>
            <person name="Seiboth B."/>
            <person name="van Solingen P."/>
            <person name="Specht T."/>
            <person name="Sun J."/>
            <person name="Taheri-Talesh N."/>
            <person name="Takeshita N."/>
            <person name="Ussery D."/>
            <person name="vanKuyk P.A."/>
            <person name="Visser H."/>
            <person name="van de Vondervoort P.J."/>
            <person name="de Vries R.P."/>
            <person name="Walton J."/>
            <person name="Xiang X."/>
            <person name="Xiong Y."/>
            <person name="Zeng A.P."/>
            <person name="Brandt B.W."/>
            <person name="Cornell M.J."/>
            <person name="van den Hondel C.A."/>
            <person name="Visser J."/>
            <person name="Oliver S.G."/>
            <person name="Turner G."/>
        </authorList>
    </citation>
    <scope>GENOME REANNOTATION</scope>
    <source>
        <strain>FGSC A4 / ATCC 38163 / CBS 112.46 / NRRL 194 / M139</strain>
    </source>
</reference>
<feature type="transit peptide" description="Mitochondrion" evidence="2">
    <location>
        <begin position="1"/>
        <end position="87"/>
    </location>
</feature>
<feature type="chain" id="PRO_0000043155" description="Presequence translocated-associated motor subunit pam17, mitochondrial">
    <location>
        <begin position="88"/>
        <end position="252"/>
    </location>
</feature>
<feature type="transmembrane region" description="Helical" evidence="2">
    <location>
        <begin position="117"/>
        <end position="137"/>
    </location>
</feature>
<feature type="transmembrane region" description="Helical" evidence="2">
    <location>
        <begin position="155"/>
        <end position="175"/>
    </location>
</feature>
<gene>
    <name type="primary">pam17</name>
    <name type="ORF">AN10067</name>
</gene>
<protein>
    <recommendedName>
        <fullName>Presequence translocated-associated motor subunit pam17, mitochondrial</fullName>
    </recommendedName>
</protein>
<accession>C8VTR5</accession>
<accession>Q5BGF9</accession>
<name>PAM17_EMENI</name>
<sequence>MHTTLLSNSMRGAALCTRVSSTTLNPVTLQTSAIYQTISLKNQTRPSSTSTVRFLKASPTLRTSSARPQAQIATSCINAKNTISVRSNSTTSTSAREEAAKLDWNSYFKLRASRRRYTLASSIVSSAVSTVVGVQVLSSQNLENLGAQVMGLDPFVVLGMATAACGAVGWLVGPFLGNAVWGLVNRSYKKAFLVKEKEFFDRIKRYRVDPSSNSMTNPVPDYYGEKIGSVQGYRQWLKDQRAYNRKRRSFIK</sequence>
<evidence type="ECO:0000250" key="1"/>
<evidence type="ECO:0000255" key="2"/>
<evidence type="ECO:0000305" key="3"/>
<comment type="function">
    <text evidence="1">Component of the PAM complex, a complex required for the translocation of transit peptide-containing proteins from the inner membrane into the mitochondrial matrix in an ATP-dependent manner.</text>
</comment>
<comment type="subunit">
    <text evidence="1">Component of the PAM complex, at least composed of mtHsp70, MGE1/mgeA, tim44, PAM16/pamP, PAM17/pamQ and PAM18/pamR.</text>
</comment>
<comment type="subcellular location">
    <subcellularLocation>
        <location evidence="1">Mitochondrion inner membrane</location>
        <topology evidence="1">Multi-pass membrane protein</topology>
    </subcellularLocation>
</comment>
<comment type="similarity">
    <text evidence="3">Belongs to the PAM17 family.</text>
</comment>
<comment type="sequence caution" evidence="3">
    <conflict type="erroneous gene model prediction">
        <sequence resource="EMBL-CDS" id="EAA65777"/>
    </conflict>
    <text>The predicted gene AN0371 has been split into 2 genes: AN10067 and AN10074.</text>
</comment>
<proteinExistence type="inferred from homology"/>
<dbReference type="EMBL" id="AACD01000006">
    <property type="protein sequence ID" value="EAA65777.1"/>
    <property type="status" value="ALT_SEQ"/>
    <property type="molecule type" value="Genomic_DNA"/>
</dbReference>
<dbReference type="EMBL" id="BN001308">
    <property type="protein sequence ID" value="CBF89621.1"/>
    <property type="molecule type" value="Genomic_DNA"/>
</dbReference>
<dbReference type="FunCoup" id="C8VTR5">
    <property type="interactions" value="47"/>
</dbReference>
<dbReference type="STRING" id="227321.C8VTR5"/>
<dbReference type="EnsemblFungi" id="CBF89621">
    <property type="protein sequence ID" value="CBF89621"/>
    <property type="gene ID" value="ANIA_10067"/>
</dbReference>
<dbReference type="VEuPathDB" id="FungiDB:AN10067"/>
<dbReference type="eggNOG" id="ENOG502S1B1">
    <property type="taxonomic scope" value="Eukaryota"/>
</dbReference>
<dbReference type="HOGENOM" id="CLU_413324_0_0_1"/>
<dbReference type="InParanoid" id="C8VTR5"/>
<dbReference type="OMA" id="MIFGFDP"/>
<dbReference type="OrthoDB" id="5970083at2759"/>
<dbReference type="Proteomes" id="UP000000560">
    <property type="component" value="Chromosome VIII"/>
</dbReference>
<dbReference type="GO" id="GO:0001405">
    <property type="term" value="C:PAM complex, Tim23 associated import motor"/>
    <property type="evidence" value="ECO:0000318"/>
    <property type="project" value="GO_Central"/>
</dbReference>
<dbReference type="GO" id="GO:0030150">
    <property type="term" value="P:protein import into mitochondrial matrix"/>
    <property type="evidence" value="ECO:0000318"/>
    <property type="project" value="GO_Central"/>
</dbReference>
<dbReference type="InterPro" id="IPR013875">
    <property type="entry name" value="Pam17"/>
</dbReference>
<dbReference type="PANTHER" id="PTHR28021">
    <property type="entry name" value="PRESEQUENCE TRANSLOCATED-ASSOCIATED MOTOR SUBUNIT PAM17, MITOCHONDRIAL"/>
    <property type="match status" value="1"/>
</dbReference>
<dbReference type="PANTHER" id="PTHR28021:SF1">
    <property type="entry name" value="PRESEQUENCE TRANSLOCATED-ASSOCIATED MOTOR SUBUNIT PAM17, MITOCHONDRIAL"/>
    <property type="match status" value="1"/>
</dbReference>
<dbReference type="Pfam" id="PF08566">
    <property type="entry name" value="Pam17"/>
    <property type="match status" value="1"/>
</dbReference>
<organism>
    <name type="scientific">Emericella nidulans (strain FGSC A4 / ATCC 38163 / CBS 112.46 / NRRL 194 / M139)</name>
    <name type="common">Aspergillus nidulans</name>
    <dbReference type="NCBI Taxonomy" id="227321"/>
    <lineage>
        <taxon>Eukaryota</taxon>
        <taxon>Fungi</taxon>
        <taxon>Dikarya</taxon>
        <taxon>Ascomycota</taxon>
        <taxon>Pezizomycotina</taxon>
        <taxon>Eurotiomycetes</taxon>
        <taxon>Eurotiomycetidae</taxon>
        <taxon>Eurotiales</taxon>
        <taxon>Aspergillaceae</taxon>
        <taxon>Aspergillus</taxon>
        <taxon>Aspergillus subgen. Nidulantes</taxon>
    </lineage>
</organism>
<keyword id="KW-0472">Membrane</keyword>
<keyword id="KW-0496">Mitochondrion</keyword>
<keyword id="KW-0999">Mitochondrion inner membrane</keyword>
<keyword id="KW-0653">Protein transport</keyword>
<keyword id="KW-1185">Reference proteome</keyword>
<keyword id="KW-0809">Transit peptide</keyword>
<keyword id="KW-0811">Translocation</keyword>
<keyword id="KW-0812">Transmembrane</keyword>
<keyword id="KW-1133">Transmembrane helix</keyword>
<keyword id="KW-0813">Transport</keyword>